<name>RLMB_HAEIN</name>
<proteinExistence type="evidence at protein level"/>
<reference key="1">
    <citation type="journal article" date="1995" name="Science">
        <title>Whole-genome random sequencing and assembly of Haemophilus influenzae Rd.</title>
        <authorList>
            <person name="Fleischmann R.D."/>
            <person name="Adams M.D."/>
            <person name="White O."/>
            <person name="Clayton R.A."/>
            <person name="Kirkness E.F."/>
            <person name="Kerlavage A.R."/>
            <person name="Bult C.J."/>
            <person name="Tomb J.-F."/>
            <person name="Dougherty B.A."/>
            <person name="Merrick J.M."/>
            <person name="McKenney K."/>
            <person name="Sutton G.G."/>
            <person name="FitzHugh W."/>
            <person name="Fields C.A."/>
            <person name="Gocayne J.D."/>
            <person name="Scott J.D."/>
            <person name="Shirley R."/>
            <person name="Liu L.-I."/>
            <person name="Glodek A."/>
            <person name="Kelley J.M."/>
            <person name="Weidman J.F."/>
            <person name="Phillips C.A."/>
            <person name="Spriggs T."/>
            <person name="Hedblom E."/>
            <person name="Cotton M.D."/>
            <person name="Utterback T.R."/>
            <person name="Hanna M.C."/>
            <person name="Nguyen D.T."/>
            <person name="Saudek D.M."/>
            <person name="Brandon R.C."/>
            <person name="Fine L.D."/>
            <person name="Fritchman J.L."/>
            <person name="Fuhrmann J.L."/>
            <person name="Geoghagen N.S.M."/>
            <person name="Gnehm C.L."/>
            <person name="McDonald L.A."/>
            <person name="Small K.V."/>
            <person name="Fraser C.M."/>
            <person name="Smith H.O."/>
            <person name="Venter J.C."/>
        </authorList>
    </citation>
    <scope>NUCLEOTIDE SEQUENCE [LARGE SCALE GENOMIC DNA]</scope>
    <source>
        <strain>ATCC 51907 / DSM 11121 / KW20 / Rd</strain>
    </source>
</reference>
<reference key="2">
    <citation type="journal article" date="2000" name="Electrophoresis">
        <title>Two-dimensional map of the proteome of Haemophilus influenzae.</title>
        <authorList>
            <person name="Langen H."/>
            <person name="Takacs B."/>
            <person name="Evers S."/>
            <person name="Berndt P."/>
            <person name="Lahm H.W."/>
            <person name="Wipf B."/>
            <person name="Gray C."/>
            <person name="Fountoulakis M."/>
        </authorList>
    </citation>
    <scope>IDENTIFICATION BY MASS SPECTROMETRY</scope>
    <source>
        <strain>ATCC 51907 / DSM 11121 / KW20 / Rd</strain>
    </source>
</reference>
<sequence>MSEQIYGIHAVNSILTHSPERLIEVFVLKGREDKRLQPLLNELYSLGIGVQFVNRQTLDKKADGEVHQGVIARVQAAKELNENDLDEILANKQNPLLLVLDGVTDPHNLGACLRTADAAGAVAVIVPKDKSAQLTSIARKVACGAAETVPLIRVTNLSRTLRDLQQNHNIWVVGTAGEATETIYQSKLTGPLALVMGAEGEGMRRLTREHCDQLISIPMAGSVSSLNVSVATGVCLFEIVRQRLGS</sequence>
<accession>P44906</accession>
<comment type="function">
    <text evidence="1">Specifically methylates the ribose of guanosine 2251 in 23S rRNA.</text>
</comment>
<comment type="catalytic activity">
    <reaction evidence="1">
        <text>guanosine(2251) in 23S rRNA + S-adenosyl-L-methionine = 2'-O-methylguanosine(2251) in 23S rRNA + S-adenosyl-L-homocysteine + H(+)</text>
        <dbReference type="Rhea" id="RHEA:24140"/>
        <dbReference type="Rhea" id="RHEA-COMP:10239"/>
        <dbReference type="Rhea" id="RHEA-COMP:10241"/>
        <dbReference type="ChEBI" id="CHEBI:15378"/>
        <dbReference type="ChEBI" id="CHEBI:57856"/>
        <dbReference type="ChEBI" id="CHEBI:59789"/>
        <dbReference type="ChEBI" id="CHEBI:74269"/>
        <dbReference type="ChEBI" id="CHEBI:74445"/>
        <dbReference type="EC" id="2.1.1.185"/>
    </reaction>
</comment>
<comment type="subcellular location">
    <subcellularLocation>
        <location evidence="1">Cytoplasm</location>
    </subcellularLocation>
</comment>
<comment type="similarity">
    <text evidence="1">Belongs to the class IV-like SAM-binding methyltransferase superfamily. RNA methyltransferase TrmH family. RlmB subfamily.</text>
</comment>
<feature type="chain" id="PRO_0000159790" description="23S rRNA (guanosine-2'-O-)-methyltransferase RlmB">
    <location>
        <begin position="1"/>
        <end position="246"/>
    </location>
</feature>
<feature type="binding site" evidence="1">
    <location>
        <position position="197"/>
    </location>
    <ligand>
        <name>S-adenosyl-L-methionine</name>
        <dbReference type="ChEBI" id="CHEBI:59789"/>
    </ligand>
</feature>
<feature type="binding site" evidence="1">
    <location>
        <position position="217"/>
    </location>
    <ligand>
        <name>S-adenosyl-L-methionine</name>
        <dbReference type="ChEBI" id="CHEBI:59789"/>
    </ligand>
</feature>
<feature type="binding site" evidence="1">
    <location>
        <position position="226"/>
    </location>
    <ligand>
        <name>S-adenosyl-L-methionine</name>
        <dbReference type="ChEBI" id="CHEBI:59789"/>
    </ligand>
</feature>
<keyword id="KW-0963">Cytoplasm</keyword>
<keyword id="KW-0489">Methyltransferase</keyword>
<keyword id="KW-1185">Reference proteome</keyword>
<keyword id="KW-0698">rRNA processing</keyword>
<keyword id="KW-0949">S-adenosyl-L-methionine</keyword>
<keyword id="KW-0808">Transferase</keyword>
<gene>
    <name evidence="1" type="primary">rlmB</name>
    <name type="ordered locus">HI_0860</name>
</gene>
<dbReference type="EC" id="2.1.1.185" evidence="1"/>
<dbReference type="EMBL" id="L42023">
    <property type="protein sequence ID" value="AAC22519.1"/>
    <property type="molecule type" value="Genomic_DNA"/>
</dbReference>
<dbReference type="PIR" id="E64160">
    <property type="entry name" value="E64160"/>
</dbReference>
<dbReference type="RefSeq" id="NP_439020.1">
    <property type="nucleotide sequence ID" value="NC_000907.1"/>
</dbReference>
<dbReference type="SMR" id="P44906"/>
<dbReference type="STRING" id="71421.HI_0860"/>
<dbReference type="EnsemblBacteria" id="AAC22519">
    <property type="protein sequence ID" value="AAC22519"/>
    <property type="gene ID" value="HI_0860"/>
</dbReference>
<dbReference type="KEGG" id="hin:HI_0860"/>
<dbReference type="PATRIC" id="fig|71421.8.peg.901"/>
<dbReference type="eggNOG" id="COG0566">
    <property type="taxonomic scope" value="Bacteria"/>
</dbReference>
<dbReference type="HOGENOM" id="CLU_021322_0_1_6"/>
<dbReference type="OrthoDB" id="9785673at2"/>
<dbReference type="PhylomeDB" id="P44906"/>
<dbReference type="BioCyc" id="HINF71421:G1GJ1-901-MONOMER"/>
<dbReference type="Proteomes" id="UP000000579">
    <property type="component" value="Chromosome"/>
</dbReference>
<dbReference type="GO" id="GO:0005829">
    <property type="term" value="C:cytosol"/>
    <property type="evidence" value="ECO:0000318"/>
    <property type="project" value="GO_Central"/>
</dbReference>
<dbReference type="GO" id="GO:0003723">
    <property type="term" value="F:RNA binding"/>
    <property type="evidence" value="ECO:0007669"/>
    <property type="project" value="InterPro"/>
</dbReference>
<dbReference type="GO" id="GO:0070039">
    <property type="term" value="F:rRNA (guanosine-2'-O-)-methyltransferase activity"/>
    <property type="evidence" value="ECO:0000318"/>
    <property type="project" value="GO_Central"/>
</dbReference>
<dbReference type="CDD" id="cd18103">
    <property type="entry name" value="SpoU-like_RlmB"/>
    <property type="match status" value="1"/>
</dbReference>
<dbReference type="FunFam" id="3.40.1280.10:FF:000005">
    <property type="entry name" value="23S rRNA (guanosine-2'-O-)-methyltransferase RlmB"/>
    <property type="match status" value="1"/>
</dbReference>
<dbReference type="FunFam" id="3.30.1330.30:FF:000007">
    <property type="entry name" value="23S rRNA methyltransferase"/>
    <property type="match status" value="1"/>
</dbReference>
<dbReference type="Gene3D" id="3.30.1330.30">
    <property type="match status" value="1"/>
</dbReference>
<dbReference type="Gene3D" id="3.40.1280.10">
    <property type="match status" value="1"/>
</dbReference>
<dbReference type="HAMAP" id="MF_01887">
    <property type="entry name" value="23SrRNA_methyltr_B"/>
    <property type="match status" value="1"/>
</dbReference>
<dbReference type="InterPro" id="IPR024915">
    <property type="entry name" value="23S_rRNA_MeTrfase_RlmB"/>
</dbReference>
<dbReference type="InterPro" id="IPR029028">
    <property type="entry name" value="Alpha/beta_knot_MTases"/>
</dbReference>
<dbReference type="InterPro" id="IPR029064">
    <property type="entry name" value="Ribosomal_eL30-like_sf"/>
</dbReference>
<dbReference type="InterPro" id="IPR004441">
    <property type="entry name" value="rRNA_MeTrfase_TrmH"/>
</dbReference>
<dbReference type="InterPro" id="IPR001537">
    <property type="entry name" value="SpoU_MeTrfase"/>
</dbReference>
<dbReference type="InterPro" id="IPR013123">
    <property type="entry name" value="SpoU_subst-bd"/>
</dbReference>
<dbReference type="InterPro" id="IPR029026">
    <property type="entry name" value="tRNA_m1G_MTases_N"/>
</dbReference>
<dbReference type="NCBIfam" id="NF008386">
    <property type="entry name" value="PRK11181.1"/>
    <property type="match status" value="1"/>
</dbReference>
<dbReference type="NCBIfam" id="TIGR00186">
    <property type="entry name" value="rRNA_methyl_3"/>
    <property type="match status" value="1"/>
</dbReference>
<dbReference type="PANTHER" id="PTHR46429">
    <property type="entry name" value="23S RRNA (GUANOSINE-2'-O-)-METHYLTRANSFERASE RLMB"/>
    <property type="match status" value="1"/>
</dbReference>
<dbReference type="PANTHER" id="PTHR46429:SF1">
    <property type="entry name" value="23S RRNA (GUANOSINE-2'-O-)-METHYLTRANSFERASE RLMB"/>
    <property type="match status" value="1"/>
</dbReference>
<dbReference type="Pfam" id="PF00588">
    <property type="entry name" value="SpoU_methylase"/>
    <property type="match status" value="1"/>
</dbReference>
<dbReference type="Pfam" id="PF08032">
    <property type="entry name" value="SpoU_sub_bind"/>
    <property type="match status" value="1"/>
</dbReference>
<dbReference type="SMART" id="SM00967">
    <property type="entry name" value="SpoU_sub_bind"/>
    <property type="match status" value="1"/>
</dbReference>
<dbReference type="SUPFAM" id="SSF75217">
    <property type="entry name" value="alpha/beta knot"/>
    <property type="match status" value="1"/>
</dbReference>
<dbReference type="SUPFAM" id="SSF55315">
    <property type="entry name" value="L30e-like"/>
    <property type="match status" value="1"/>
</dbReference>
<organism>
    <name type="scientific">Haemophilus influenzae (strain ATCC 51907 / DSM 11121 / KW20 / Rd)</name>
    <dbReference type="NCBI Taxonomy" id="71421"/>
    <lineage>
        <taxon>Bacteria</taxon>
        <taxon>Pseudomonadati</taxon>
        <taxon>Pseudomonadota</taxon>
        <taxon>Gammaproteobacteria</taxon>
        <taxon>Pasteurellales</taxon>
        <taxon>Pasteurellaceae</taxon>
        <taxon>Haemophilus</taxon>
    </lineage>
</organism>
<protein>
    <recommendedName>
        <fullName evidence="1">23S rRNA (guanosine-2'-O-)-methyltransferase RlmB</fullName>
        <ecNumber evidence="1">2.1.1.185</ecNumber>
    </recommendedName>
    <alternativeName>
        <fullName evidence="1">23S rRNA (guanosine2251 2'-O)-methyltransferase</fullName>
    </alternativeName>
    <alternativeName>
        <fullName evidence="1">23S rRNA Gm2251 2'-O-methyltransferase</fullName>
    </alternativeName>
</protein>
<evidence type="ECO:0000255" key="1">
    <source>
        <dbReference type="HAMAP-Rule" id="MF_01887"/>
    </source>
</evidence>